<organism>
    <name type="scientific">Psychromonas ingrahamii (strain DSM 17664 / CCUG 51855 / 37)</name>
    <dbReference type="NCBI Taxonomy" id="357804"/>
    <lineage>
        <taxon>Bacteria</taxon>
        <taxon>Pseudomonadati</taxon>
        <taxon>Pseudomonadota</taxon>
        <taxon>Gammaproteobacteria</taxon>
        <taxon>Alteromonadales</taxon>
        <taxon>Psychromonadaceae</taxon>
        <taxon>Psychromonas</taxon>
    </lineage>
</organism>
<proteinExistence type="inferred from homology"/>
<keyword id="KW-0240">DNA-directed RNA polymerase</keyword>
<keyword id="KW-0548">Nucleotidyltransferase</keyword>
<keyword id="KW-1185">Reference proteome</keyword>
<keyword id="KW-0804">Transcription</keyword>
<keyword id="KW-0808">Transferase</keyword>
<reference key="1">
    <citation type="journal article" date="2008" name="BMC Genomics">
        <title>Genomics of an extreme psychrophile, Psychromonas ingrahamii.</title>
        <authorList>
            <person name="Riley M."/>
            <person name="Staley J.T."/>
            <person name="Danchin A."/>
            <person name="Wang T.Z."/>
            <person name="Brettin T.S."/>
            <person name="Hauser L.J."/>
            <person name="Land M.L."/>
            <person name="Thompson L.S."/>
        </authorList>
    </citation>
    <scope>NUCLEOTIDE SEQUENCE [LARGE SCALE GENOMIC DNA]</scope>
    <source>
        <strain>DSM 17664 / CCUG 51855 / 37</strain>
    </source>
</reference>
<accession>A1T065</accession>
<name>RPOB_PSYIN</name>
<comment type="function">
    <text evidence="1">DNA-dependent RNA polymerase catalyzes the transcription of DNA into RNA using the four ribonucleoside triphosphates as substrates.</text>
</comment>
<comment type="catalytic activity">
    <reaction evidence="1">
        <text>RNA(n) + a ribonucleoside 5'-triphosphate = RNA(n+1) + diphosphate</text>
        <dbReference type="Rhea" id="RHEA:21248"/>
        <dbReference type="Rhea" id="RHEA-COMP:14527"/>
        <dbReference type="Rhea" id="RHEA-COMP:17342"/>
        <dbReference type="ChEBI" id="CHEBI:33019"/>
        <dbReference type="ChEBI" id="CHEBI:61557"/>
        <dbReference type="ChEBI" id="CHEBI:140395"/>
        <dbReference type="EC" id="2.7.7.6"/>
    </reaction>
</comment>
<comment type="subunit">
    <text evidence="1">The RNAP catalytic core consists of 2 alpha, 1 beta, 1 beta' and 1 omega subunit. When a sigma factor is associated with the core the holoenzyme is formed, which can initiate transcription.</text>
</comment>
<comment type="similarity">
    <text evidence="1">Belongs to the RNA polymerase beta chain family.</text>
</comment>
<gene>
    <name evidence="1" type="primary">rpoB</name>
    <name type="ordered locus">Ping_3446</name>
</gene>
<protein>
    <recommendedName>
        <fullName evidence="1">DNA-directed RNA polymerase subunit beta</fullName>
        <shortName evidence="1">RNAP subunit beta</shortName>
        <ecNumber evidence="1">2.7.7.6</ecNumber>
    </recommendedName>
    <alternativeName>
        <fullName evidence="1">RNA polymerase subunit beta</fullName>
    </alternativeName>
    <alternativeName>
        <fullName evidence="1">Transcriptase subunit beta</fullName>
    </alternativeName>
</protein>
<feature type="chain" id="PRO_0000300379" description="DNA-directed RNA polymerase subunit beta">
    <location>
        <begin position="1"/>
        <end position="1346"/>
    </location>
</feature>
<dbReference type="EC" id="2.7.7.6" evidence="1"/>
<dbReference type="EMBL" id="CP000510">
    <property type="protein sequence ID" value="ABM05130.1"/>
    <property type="molecule type" value="Genomic_DNA"/>
</dbReference>
<dbReference type="RefSeq" id="WP_011771682.1">
    <property type="nucleotide sequence ID" value="NC_008709.1"/>
</dbReference>
<dbReference type="SMR" id="A1T065"/>
<dbReference type="STRING" id="357804.Ping_3446"/>
<dbReference type="KEGG" id="pin:Ping_3446"/>
<dbReference type="eggNOG" id="COG0085">
    <property type="taxonomic scope" value="Bacteria"/>
</dbReference>
<dbReference type="HOGENOM" id="CLU_000524_4_3_6"/>
<dbReference type="OrthoDB" id="9803954at2"/>
<dbReference type="Proteomes" id="UP000000639">
    <property type="component" value="Chromosome"/>
</dbReference>
<dbReference type="GO" id="GO:0000428">
    <property type="term" value="C:DNA-directed RNA polymerase complex"/>
    <property type="evidence" value="ECO:0007669"/>
    <property type="project" value="UniProtKB-KW"/>
</dbReference>
<dbReference type="GO" id="GO:0003677">
    <property type="term" value="F:DNA binding"/>
    <property type="evidence" value="ECO:0007669"/>
    <property type="project" value="UniProtKB-UniRule"/>
</dbReference>
<dbReference type="GO" id="GO:0003899">
    <property type="term" value="F:DNA-directed RNA polymerase activity"/>
    <property type="evidence" value="ECO:0007669"/>
    <property type="project" value="UniProtKB-UniRule"/>
</dbReference>
<dbReference type="GO" id="GO:0032549">
    <property type="term" value="F:ribonucleoside binding"/>
    <property type="evidence" value="ECO:0007669"/>
    <property type="project" value="InterPro"/>
</dbReference>
<dbReference type="GO" id="GO:0006351">
    <property type="term" value="P:DNA-templated transcription"/>
    <property type="evidence" value="ECO:0007669"/>
    <property type="project" value="UniProtKB-UniRule"/>
</dbReference>
<dbReference type="CDD" id="cd00653">
    <property type="entry name" value="RNA_pol_B_RPB2"/>
    <property type="match status" value="1"/>
</dbReference>
<dbReference type="FunFam" id="2.40.270.10:FF:000004">
    <property type="entry name" value="DNA-directed RNA polymerase subunit beta"/>
    <property type="match status" value="1"/>
</dbReference>
<dbReference type="FunFam" id="2.40.50.100:FF:000006">
    <property type="entry name" value="DNA-directed RNA polymerase subunit beta"/>
    <property type="match status" value="1"/>
</dbReference>
<dbReference type="FunFam" id="3.90.1100.10:FF:000002">
    <property type="entry name" value="DNA-directed RNA polymerase subunit beta"/>
    <property type="match status" value="1"/>
</dbReference>
<dbReference type="FunFam" id="3.90.1110.10:FF:000001">
    <property type="entry name" value="DNA-directed RNA polymerase subunit beta"/>
    <property type="match status" value="1"/>
</dbReference>
<dbReference type="FunFam" id="3.90.1800.10:FF:000001">
    <property type="entry name" value="DNA-directed RNA polymerase subunit beta"/>
    <property type="match status" value="1"/>
</dbReference>
<dbReference type="Gene3D" id="2.40.50.100">
    <property type="match status" value="1"/>
</dbReference>
<dbReference type="Gene3D" id="2.40.50.150">
    <property type="match status" value="1"/>
</dbReference>
<dbReference type="Gene3D" id="3.90.1100.10">
    <property type="match status" value="2"/>
</dbReference>
<dbReference type="Gene3D" id="2.30.150.10">
    <property type="entry name" value="DNA-directed RNA polymerase, beta subunit, external 1 domain"/>
    <property type="match status" value="1"/>
</dbReference>
<dbReference type="Gene3D" id="2.40.270.10">
    <property type="entry name" value="DNA-directed RNA polymerase, subunit 2, domain 6"/>
    <property type="match status" value="2"/>
</dbReference>
<dbReference type="Gene3D" id="3.90.1800.10">
    <property type="entry name" value="RNA polymerase alpha subunit dimerisation domain"/>
    <property type="match status" value="1"/>
</dbReference>
<dbReference type="Gene3D" id="3.90.1110.10">
    <property type="entry name" value="RNA polymerase Rpb2, domain 2"/>
    <property type="match status" value="2"/>
</dbReference>
<dbReference type="HAMAP" id="MF_01321">
    <property type="entry name" value="RNApol_bact_RpoB"/>
    <property type="match status" value="1"/>
</dbReference>
<dbReference type="InterPro" id="IPR042107">
    <property type="entry name" value="DNA-dir_RNA_pol_bsu_ext_1_sf"/>
</dbReference>
<dbReference type="InterPro" id="IPR019462">
    <property type="entry name" value="DNA-dir_RNA_pol_bsu_external_1"/>
</dbReference>
<dbReference type="InterPro" id="IPR015712">
    <property type="entry name" value="DNA-dir_RNA_pol_su2"/>
</dbReference>
<dbReference type="InterPro" id="IPR007120">
    <property type="entry name" value="DNA-dir_RNAP_su2_dom"/>
</dbReference>
<dbReference type="InterPro" id="IPR037033">
    <property type="entry name" value="DNA-dir_RNAP_su2_hyb_sf"/>
</dbReference>
<dbReference type="InterPro" id="IPR010243">
    <property type="entry name" value="RNA_pol_bsu_bac"/>
</dbReference>
<dbReference type="InterPro" id="IPR007121">
    <property type="entry name" value="RNA_pol_bsu_CS"/>
</dbReference>
<dbReference type="InterPro" id="IPR007644">
    <property type="entry name" value="RNA_pol_bsu_protrusion"/>
</dbReference>
<dbReference type="InterPro" id="IPR007642">
    <property type="entry name" value="RNA_pol_Rpb2_2"/>
</dbReference>
<dbReference type="InterPro" id="IPR037034">
    <property type="entry name" value="RNA_pol_Rpb2_2_sf"/>
</dbReference>
<dbReference type="InterPro" id="IPR007645">
    <property type="entry name" value="RNA_pol_Rpb2_3"/>
</dbReference>
<dbReference type="InterPro" id="IPR007641">
    <property type="entry name" value="RNA_pol_Rpb2_7"/>
</dbReference>
<dbReference type="InterPro" id="IPR014724">
    <property type="entry name" value="RNA_pol_RPB2_OB-fold"/>
</dbReference>
<dbReference type="NCBIfam" id="NF001616">
    <property type="entry name" value="PRK00405.1"/>
    <property type="match status" value="1"/>
</dbReference>
<dbReference type="NCBIfam" id="TIGR02013">
    <property type="entry name" value="rpoB"/>
    <property type="match status" value="1"/>
</dbReference>
<dbReference type="PANTHER" id="PTHR20856">
    <property type="entry name" value="DNA-DIRECTED RNA POLYMERASE I SUBUNIT 2"/>
    <property type="match status" value="1"/>
</dbReference>
<dbReference type="Pfam" id="PF04563">
    <property type="entry name" value="RNA_pol_Rpb2_1"/>
    <property type="match status" value="1"/>
</dbReference>
<dbReference type="Pfam" id="PF04561">
    <property type="entry name" value="RNA_pol_Rpb2_2"/>
    <property type="match status" value="2"/>
</dbReference>
<dbReference type="Pfam" id="PF04565">
    <property type="entry name" value="RNA_pol_Rpb2_3"/>
    <property type="match status" value="1"/>
</dbReference>
<dbReference type="Pfam" id="PF10385">
    <property type="entry name" value="RNA_pol_Rpb2_45"/>
    <property type="match status" value="1"/>
</dbReference>
<dbReference type="Pfam" id="PF00562">
    <property type="entry name" value="RNA_pol_Rpb2_6"/>
    <property type="match status" value="1"/>
</dbReference>
<dbReference type="Pfam" id="PF04560">
    <property type="entry name" value="RNA_pol_Rpb2_7"/>
    <property type="match status" value="1"/>
</dbReference>
<dbReference type="SUPFAM" id="SSF64484">
    <property type="entry name" value="beta and beta-prime subunits of DNA dependent RNA-polymerase"/>
    <property type="match status" value="1"/>
</dbReference>
<dbReference type="PROSITE" id="PS01166">
    <property type="entry name" value="RNA_POL_BETA"/>
    <property type="match status" value="1"/>
</dbReference>
<sequence>MGYSYTEKKRIRKDFGKRPQVMEKPYLLSIQLDSFKRFIEVDLTGEVGLEAAFNSIFPIASYSGTSELQYVSYRLGEPVFDVKECQIRGVTYSASLRVKLRLVIYDRDAPAGTVKDIREQEVYMGEMPLMTENGTFVINGTERVIVSQLHRSPGVFFDHDKGKTHSSGKVLYNARVIPYRGSWLDFEFDPKDNLFVRIDRRRKLPATIMLRALEYSTQEILAIFYDTTKFDIKDGVISMSLIADRLRGEMALFDIAANGKIYVEQGKRITARHIKQLEKDNINTLDVPVEYIAEKDLVVAKDYISKETGEIIVSANDILTLEILAELTQSGITSFDIIYTNELDCGSFISDTLRVDSSSNRLEALVEIYRMMRPGEPPTKDAAEGLFHNLFFAEERYELSKVGRMKFNRRVGIDGDEGAGILSKDDILSVMKTLIAIRNGDGIVDDIDHLGNRRIRCVGEMAENQFRVGLVRVERAVRERLSLGDLDATMPQDLINAKPISAAVKEFFGSSQLSQFMDQNNPLSEVTHKRRISALGPGGLTRERAGFEVRDVHPTHYGRLCPIETPEGPNIGLINSLATFSRTNSYGFLETPYRKVENGKPTDQVEYLSAIEEGSFVIAQASASIDENGLLDEELIPCRHKGESTFLSPADIDYMDVSPQQIISVAASLIPFLEHDDANRALMGSNMQRQAVPTLRADKPLVGTGIERRLAIDSGVTIIAKRSGVIDYVDASRIVVKVDDNELLPGEAGIDIYNLTKYTRSNQNTCINQKPTCEPGEPIVRGDVLADGPSTDMGDLALGQNMKIAFMPWNGYNFEDSILISERVSQEDRFTTIHIQEFSCVARETKLGSEEISADIPNVGEAALSKLDESGIVYVGAEVKPGDILVGKVTPKGETQLTPEEKLLRAIFGEKASDVKDSSLRVAASTYATVIDVQVFTRDGVEKDKRALEIEEMQLKAAKKDLTEKFKILENAIYEKALAILVGAGQDEARLLQMPRAQWLEVQIDDETKQSYLDQIITQYDEVKADYDKEFDIKRRKITQGDDLAPGVQKIVKVYLAVRRRLQPGDKMAGRHGNKGVISNIVPVEDMPHDEFGVPVDIVLNPLGVPSRMNIGQVLETHLGLAAKGVGEKLERMIKYQRDIEITKVREFVQKLYSFGDAPCHVDLNDFDDEAVMRLAKNLYKGLPVATPAFDGANEGEIRELLRMADLPESGQLQLTDGRTGIQFERPVTVGYMYMLKLNHLVDDKMHARSTGSYSLVTQQPLGGKAQFGGQRFGEMEVWALEAYGAAYTLQEMLTVKSDDVNGRTKMYKNIVDGDHRMEPGMPESFNVLLKEIRSLSINIELDESN</sequence>
<evidence type="ECO:0000255" key="1">
    <source>
        <dbReference type="HAMAP-Rule" id="MF_01321"/>
    </source>
</evidence>